<feature type="chain" id="PRO_0000378525" description="Para-Rep C6">
    <location>
        <begin position="1"/>
        <end position="285"/>
    </location>
</feature>
<feature type="domain" description="CRESS-DNA virus Rep endonuclease" evidence="3">
    <location>
        <begin position="3"/>
        <end position="99"/>
    </location>
</feature>
<feature type="short sequence motif" description="RCR-1" evidence="3">
    <location>
        <begin position="10"/>
        <end position="13"/>
    </location>
</feature>
<feature type="short sequence motif" description="RCR-2" evidence="3">
    <location>
        <begin position="42"/>
        <end position="44"/>
    </location>
</feature>
<feature type="short sequence motif" description="Nuclear localization signal" evidence="2">
    <location>
        <begin position="52"/>
        <end position="74"/>
    </location>
</feature>
<feature type="short sequence motif" description="RCR-3" evidence="3">
    <location>
        <begin position="82"/>
        <end position="85"/>
    </location>
</feature>
<feature type="short sequence motif" description="Nuclear localization signal" evidence="2">
    <location>
        <begin position="99"/>
        <end position="105"/>
    </location>
</feature>
<feature type="active site" description="For DNA cleavage activity" evidence="3">
    <location>
        <position position="82"/>
    </location>
</feature>
<feature type="binding site" evidence="2">
    <location>
        <position position="36"/>
    </location>
    <ligand>
        <name>a divalent metal cation</name>
        <dbReference type="ChEBI" id="CHEBI:60240"/>
    </ligand>
</feature>
<feature type="binding site" evidence="2">
    <location>
        <position position="42"/>
    </location>
    <ligand>
        <name>a divalent metal cation</name>
        <dbReference type="ChEBI" id="CHEBI:60240"/>
    </ligand>
</feature>
<feature type="binding site" evidence="2">
    <location>
        <position position="87"/>
    </location>
    <ligand>
        <name>a divalent metal cation</name>
        <dbReference type="ChEBI" id="CHEBI:60240"/>
    </ligand>
</feature>
<feature type="binding site" evidence="1">
    <location>
        <begin position="175"/>
        <end position="183"/>
    </location>
    <ligand>
        <name>ATP</name>
        <dbReference type="ChEBI" id="CHEBI:30616"/>
    </ligand>
</feature>
<sequence length="285" mass="33500">MPTRQSTSWVFTLNFEGEIPILPFNESVQYACWQHERVGHDHLQGFIQFKSRNTTLRQAKYIFNGLNPHLEIARDVEKAQLYAMKEDSRVAGPWEYGLFIKRGSHKRKLMERFEEDGEEMKIADPSLYRRCLSRKMAEEQRCSSEWNYDLRPWQEEVMHLLEEEPDYRTIIWVYGPAGNEGKSTFARHLSLKDGWGYLPGGKTQDMMHLVTAEPKNNWVFDIPRVSSEYVNYGVIEQVKNRVMVNTKYEPCVMRDDNHPVHVIVFANVLPDLGKLSEDRIKLIRC</sequence>
<protein>
    <recommendedName>
        <fullName>Para-Rep C6</fullName>
        <shortName>Rep6</shortName>
        <ecNumber>2.7.7.-</ecNumber>
        <ecNumber>3.1.21.-</ecNumber>
        <ecNumber>3.6.1.-</ecNumber>
    </recommendedName>
    <alternativeName>
        <fullName>Replication-associated protein of non-essential DNA C6</fullName>
    </alternativeName>
</protein>
<dbReference type="EC" id="2.7.7.-"/>
<dbReference type="EC" id="3.1.21.-"/>
<dbReference type="EC" id="3.6.1.-"/>
<dbReference type="EMBL" id="U16735">
    <property type="protein sequence ID" value="AAA68022.1"/>
    <property type="molecule type" value="Genomic_DNA"/>
</dbReference>
<dbReference type="SMR" id="Q87013"/>
<dbReference type="KEGG" id="vg:18479562"/>
<dbReference type="Proteomes" id="UP000006543">
    <property type="component" value="Segment 6"/>
</dbReference>
<dbReference type="GO" id="GO:0042025">
    <property type="term" value="C:host cell nucleus"/>
    <property type="evidence" value="ECO:0007669"/>
    <property type="project" value="UniProtKB-SubCell"/>
</dbReference>
<dbReference type="GO" id="GO:0005524">
    <property type="term" value="F:ATP binding"/>
    <property type="evidence" value="ECO:0007669"/>
    <property type="project" value="UniProtKB-KW"/>
</dbReference>
<dbReference type="GO" id="GO:0016887">
    <property type="term" value="F:ATP hydrolysis activity"/>
    <property type="evidence" value="ECO:0007669"/>
    <property type="project" value="RHEA"/>
</dbReference>
<dbReference type="GO" id="GO:0003677">
    <property type="term" value="F:DNA binding"/>
    <property type="evidence" value="ECO:0007669"/>
    <property type="project" value="UniProtKB-KW"/>
</dbReference>
<dbReference type="GO" id="GO:0004519">
    <property type="term" value="F:endonuclease activity"/>
    <property type="evidence" value="ECO:0007669"/>
    <property type="project" value="UniProtKB-KW"/>
</dbReference>
<dbReference type="GO" id="GO:0046872">
    <property type="term" value="F:metal ion binding"/>
    <property type="evidence" value="ECO:0007669"/>
    <property type="project" value="UniProtKB-KW"/>
</dbReference>
<dbReference type="GO" id="GO:0016779">
    <property type="term" value="F:nucleotidyltransferase activity"/>
    <property type="evidence" value="ECO:0007669"/>
    <property type="project" value="UniProtKB-KW"/>
</dbReference>
<dbReference type="GO" id="GO:0003723">
    <property type="term" value="F:RNA binding"/>
    <property type="evidence" value="ECO:0007669"/>
    <property type="project" value="InterPro"/>
</dbReference>
<dbReference type="GO" id="GO:0003724">
    <property type="term" value="F:RNA helicase activity"/>
    <property type="evidence" value="ECO:0007669"/>
    <property type="project" value="InterPro"/>
</dbReference>
<dbReference type="GO" id="GO:0006260">
    <property type="term" value="P:DNA replication"/>
    <property type="evidence" value="ECO:0007669"/>
    <property type="project" value="UniProtKB-KW"/>
</dbReference>
<dbReference type="Gene3D" id="3.40.1310.20">
    <property type="match status" value="1"/>
</dbReference>
<dbReference type="InterPro" id="IPR049912">
    <property type="entry name" value="CRESS_DNA_REP"/>
</dbReference>
<dbReference type="InterPro" id="IPR000605">
    <property type="entry name" value="Helicase_SF3_ssDNA/RNA_vir"/>
</dbReference>
<dbReference type="Pfam" id="PF00910">
    <property type="entry name" value="RNA_helicase"/>
    <property type="match status" value="1"/>
</dbReference>
<dbReference type="Pfam" id="PF02407">
    <property type="entry name" value="Viral_Rep"/>
    <property type="match status" value="1"/>
</dbReference>
<dbReference type="PROSITE" id="PS52020">
    <property type="entry name" value="CRESS_DNA_REP"/>
    <property type="match status" value="1"/>
</dbReference>
<comment type="function">
    <text evidence="1">Initiates and terminates the replication only of its own subviral DNA molecule. The closed circular ssDNA genome is first converted to a superhelical dsDNA. Rep binds a specific hairpin at the genome origin of replication. Introduces an endonucleolytic nick within the intergenic region of the genome, thereby initiating the rolling circle replication (RCR). Following cleavage, binds covalently to the 5'-phosphate of DNA as a tyrosyl ester. The cleavage gives rise to a free 3'-OH that serves as a primer for the cellular DNA polymerase. The polymerase synthesizes the (+) strand DNA by rolling circle mechanism. After one round of replication, a Rep-catalyzed nucleotidyl transfer reaction releases a circular single-stranded virus genome, thereby terminating the replication. Displays origin-specific DNA cleavage, nucleotidyl transferase, ATPase and helicase activities (By similarity).</text>
</comment>
<comment type="catalytic activity">
    <reaction>
        <text>ATP + H2O = ADP + phosphate + H(+)</text>
        <dbReference type="Rhea" id="RHEA:13065"/>
        <dbReference type="ChEBI" id="CHEBI:15377"/>
        <dbReference type="ChEBI" id="CHEBI:15378"/>
        <dbReference type="ChEBI" id="CHEBI:30616"/>
        <dbReference type="ChEBI" id="CHEBI:43474"/>
        <dbReference type="ChEBI" id="CHEBI:456216"/>
    </reaction>
</comment>
<comment type="cofactor">
    <cofactor evidence="1">
        <name>Mg(2+)</name>
        <dbReference type="ChEBI" id="CHEBI:18420"/>
    </cofactor>
    <cofactor evidence="1">
        <name>Mn(2+)</name>
        <dbReference type="ChEBI" id="CHEBI:29035"/>
    </cofactor>
    <text evidence="1">Divalent metal cations, possibly Mg(2+) or Mn(2+).</text>
</comment>
<comment type="subunit">
    <text evidence="1 4">Homooligomer (Potential). Rep binds to repeated DNA motifs (iterons) (By similarity).</text>
</comment>
<comment type="subcellular location">
    <subcellularLocation>
        <location evidence="4">Host nucleus</location>
    </subcellularLocation>
</comment>
<comment type="domain">
    <text evidence="1">There are 3 rolling circle replication (RCR) motifs. RCR-2 is probably involved in metal coordination. RCR-3 is required for phosphodiester bond cleavage for initiation of RCR (By similarity).</text>
</comment>
<comment type="miscellaneous">
    <text>The genome of nanoviruses is composed of six to eight segments. In addition, some isolates contain subviral DNAs.</text>
</comment>
<comment type="similarity">
    <text evidence="4">Belongs to the nanoviridea/circoviridae replication-associated protein family.</text>
</comment>
<comment type="caution">
    <text evidence="4">This protein is encoded by a subviral DNA that is not present in all isolates of the virus.</text>
</comment>
<gene>
    <name type="primary">C6</name>
</gene>
<organism>
    <name type="scientific">Subterranean clover stunt C6 alphasatellite</name>
    <name type="common">SCSC6A</name>
    <dbReference type="NCBI Taxonomy" id="1458459"/>
    <lineage>
        <taxon>Viruses</taxon>
        <taxon>Viruses incertae sedis</taxon>
        <taxon>Alphasatellitidae</taxon>
        <taxon>Nanoalphasatellitinae</taxon>
        <taxon>Clostunsatellite</taxon>
        <taxon>Subterranean clover stunt alphasatellite 2</taxon>
    </lineage>
</organism>
<name>REP6_SCSC6</name>
<accession>Q87013</accession>
<keyword id="KW-0067">ATP-binding</keyword>
<keyword id="KW-0190">Covalent protein-DNA linkage</keyword>
<keyword id="KW-0235">DNA replication</keyword>
<keyword id="KW-0238">DNA-binding</keyword>
<keyword id="KW-0255">Endonuclease</keyword>
<keyword id="KW-0347">Helicase</keyword>
<keyword id="KW-1048">Host nucleus</keyword>
<keyword id="KW-0378">Hydrolase</keyword>
<keyword id="KW-0479">Metal-binding</keyword>
<keyword id="KW-0511">Multifunctional enzyme</keyword>
<keyword id="KW-0540">Nuclease</keyword>
<keyword id="KW-0547">Nucleotide-binding</keyword>
<keyword id="KW-0548">Nucleotidyltransferase</keyword>
<keyword id="KW-1185">Reference proteome</keyword>
<keyword id="KW-0808">Transferase</keyword>
<evidence type="ECO:0000250" key="1"/>
<evidence type="ECO:0000255" key="2"/>
<evidence type="ECO:0000255" key="3">
    <source>
        <dbReference type="PROSITE-ProRule" id="PRU01364"/>
    </source>
</evidence>
<evidence type="ECO:0000305" key="4"/>
<reference key="1">
    <citation type="journal article" date="1995" name="Virology">
        <title>Sequence of subterranean clover stunt virus DNA: affinities with the geminiviruses.</title>
        <authorList>
            <person name="Boevink P.C."/>
            <person name="Chu P.W.G."/>
            <person name="Keese P.K."/>
        </authorList>
    </citation>
    <scope>NUCLEOTIDE SEQUENCE [GENOMIC DNA]</scope>
</reference>
<proteinExistence type="inferred from homology"/>